<gene>
    <name evidence="1" type="primary">atpA</name>
    <name type="ordered locus">CLL_A2861</name>
</gene>
<proteinExistence type="inferred from homology"/>
<sequence>MKTGKIIKVSGPLVVAEGMDEANIYDVCKVGEKGLIGEIIEMRGDKASIQVYEETSGIGPGDPVVTTGEPLSVELGPGLIESMFDGIQRPLDAFMEAAKSSFLTRGVSVPSLNREKKWDFKPTAKVGDDVKSGTVIGTVQETPVVEQRIMIPIGIEGKIKEIKAGSFTVTETIAIVETEKGDREVQLMQKWPVRKGRPYSAKINPVEPMLTGQRVIDTFFPVAKGGAAAIPGPFGAGKTVTQHQIAKWGDAEIVVYVGCGERGNEMTDVVNEFPELIDPKTGESLMKRTVLIANTSNMPVAAREASIYTGITIAEYFRDMGYSVSIMADSTSRWAEALREMSGRLEEMPGDEGYPAYLGSRLADYYERAGKVECLGNDGRIGSITAIGAVSPPGGDISEPVSQSTLRIVKVFWGLDAQLAYQRHFPTINWLTSYSLYADTIDKWMNGNVAENWGALRLEAMTILQDEAQLQEIVRLVGIDALSEKDRLKLDVAKSIREDYLQQNGFHEIDTYTSLKKQYKMLNLILGYRKEAERALEAGVYLNDILAMEDLKDRIARSKYIHEDDLEKMDQIVVDLKNAIDNLINKGGVANA</sequence>
<feature type="chain" id="PRO_1000115637" description="V-type ATP synthase alpha chain">
    <location>
        <begin position="1"/>
        <end position="592"/>
    </location>
</feature>
<feature type="binding site" evidence="1">
    <location>
        <begin position="232"/>
        <end position="239"/>
    </location>
    <ligand>
        <name>ATP</name>
        <dbReference type="ChEBI" id="CHEBI:30616"/>
    </ligand>
</feature>
<evidence type="ECO:0000255" key="1">
    <source>
        <dbReference type="HAMAP-Rule" id="MF_00309"/>
    </source>
</evidence>
<protein>
    <recommendedName>
        <fullName evidence="1">V-type ATP synthase alpha chain</fullName>
        <ecNumber evidence="1">7.1.2.2</ecNumber>
    </recommendedName>
    <alternativeName>
        <fullName evidence="1">V-ATPase subunit A</fullName>
    </alternativeName>
</protein>
<organism>
    <name type="scientific">Clostridium botulinum (strain Eklund 17B / Type B)</name>
    <dbReference type="NCBI Taxonomy" id="935198"/>
    <lineage>
        <taxon>Bacteria</taxon>
        <taxon>Bacillati</taxon>
        <taxon>Bacillota</taxon>
        <taxon>Clostridia</taxon>
        <taxon>Eubacteriales</taxon>
        <taxon>Clostridiaceae</taxon>
        <taxon>Clostridium</taxon>
    </lineage>
</organism>
<comment type="function">
    <text evidence="1">Produces ATP from ADP in the presence of a proton gradient across the membrane. The V-type alpha chain is a catalytic subunit.</text>
</comment>
<comment type="catalytic activity">
    <reaction evidence="1">
        <text>ATP + H2O + 4 H(+)(in) = ADP + phosphate + 5 H(+)(out)</text>
        <dbReference type="Rhea" id="RHEA:57720"/>
        <dbReference type="ChEBI" id="CHEBI:15377"/>
        <dbReference type="ChEBI" id="CHEBI:15378"/>
        <dbReference type="ChEBI" id="CHEBI:30616"/>
        <dbReference type="ChEBI" id="CHEBI:43474"/>
        <dbReference type="ChEBI" id="CHEBI:456216"/>
        <dbReference type="EC" id="7.1.2.2"/>
    </reaction>
</comment>
<comment type="similarity">
    <text evidence="1">Belongs to the ATPase alpha/beta chains family.</text>
</comment>
<reference key="1">
    <citation type="submission" date="2008-04" db="EMBL/GenBank/DDBJ databases">
        <title>Complete sequence of Clostridium botulinum strain Eklund.</title>
        <authorList>
            <person name="Brinkac L.M."/>
            <person name="Brown J.L."/>
            <person name="Bruce D."/>
            <person name="Detter C."/>
            <person name="Munk C."/>
            <person name="Smith L.A."/>
            <person name="Smith T.J."/>
            <person name="Sutton G."/>
            <person name="Brettin T.S."/>
        </authorList>
    </citation>
    <scope>NUCLEOTIDE SEQUENCE [LARGE SCALE GENOMIC DNA]</scope>
    <source>
        <strain>Eklund 17B / Type B</strain>
    </source>
</reference>
<accession>B2TP91</accession>
<keyword id="KW-0066">ATP synthesis</keyword>
<keyword id="KW-0067">ATP-binding</keyword>
<keyword id="KW-0375">Hydrogen ion transport</keyword>
<keyword id="KW-0406">Ion transport</keyword>
<keyword id="KW-0547">Nucleotide-binding</keyword>
<keyword id="KW-1278">Translocase</keyword>
<keyword id="KW-0813">Transport</keyword>
<dbReference type="EC" id="7.1.2.2" evidence="1"/>
<dbReference type="EMBL" id="CP001056">
    <property type="protein sequence ID" value="ACD24834.1"/>
    <property type="molecule type" value="Genomic_DNA"/>
</dbReference>
<dbReference type="SMR" id="B2TP91"/>
<dbReference type="KEGG" id="cbk:CLL_A2861"/>
<dbReference type="PATRIC" id="fig|935198.13.peg.2822"/>
<dbReference type="HOGENOM" id="CLU_008162_3_1_9"/>
<dbReference type="Proteomes" id="UP000001195">
    <property type="component" value="Chromosome"/>
</dbReference>
<dbReference type="GO" id="GO:0045259">
    <property type="term" value="C:proton-transporting ATP synthase complex"/>
    <property type="evidence" value="ECO:0007669"/>
    <property type="project" value="UniProtKB-ARBA"/>
</dbReference>
<dbReference type="GO" id="GO:0005524">
    <property type="term" value="F:ATP binding"/>
    <property type="evidence" value="ECO:0007669"/>
    <property type="project" value="UniProtKB-UniRule"/>
</dbReference>
<dbReference type="GO" id="GO:0046933">
    <property type="term" value="F:proton-transporting ATP synthase activity, rotational mechanism"/>
    <property type="evidence" value="ECO:0007669"/>
    <property type="project" value="UniProtKB-UniRule"/>
</dbReference>
<dbReference type="GO" id="GO:0046961">
    <property type="term" value="F:proton-transporting ATPase activity, rotational mechanism"/>
    <property type="evidence" value="ECO:0007669"/>
    <property type="project" value="InterPro"/>
</dbReference>
<dbReference type="GO" id="GO:0042777">
    <property type="term" value="P:proton motive force-driven plasma membrane ATP synthesis"/>
    <property type="evidence" value="ECO:0007669"/>
    <property type="project" value="UniProtKB-UniRule"/>
</dbReference>
<dbReference type="CDD" id="cd18111">
    <property type="entry name" value="ATP-synt_V_A-type_alpha_C"/>
    <property type="match status" value="1"/>
</dbReference>
<dbReference type="CDD" id="cd18119">
    <property type="entry name" value="ATP-synt_V_A-type_alpha_N"/>
    <property type="match status" value="1"/>
</dbReference>
<dbReference type="CDD" id="cd01134">
    <property type="entry name" value="V_A-ATPase_A"/>
    <property type="match status" value="1"/>
</dbReference>
<dbReference type="FunFam" id="2.40.30.20:FF:000002">
    <property type="entry name" value="V-type proton ATPase catalytic subunit A"/>
    <property type="match status" value="1"/>
</dbReference>
<dbReference type="Gene3D" id="2.40.30.20">
    <property type="match status" value="1"/>
</dbReference>
<dbReference type="Gene3D" id="2.40.50.100">
    <property type="match status" value="1"/>
</dbReference>
<dbReference type="Gene3D" id="1.10.1140.10">
    <property type="entry name" value="Bovine Mitochondrial F1-atpase, Atp Synthase Beta Chain, Chain D, domain 3"/>
    <property type="match status" value="1"/>
</dbReference>
<dbReference type="Gene3D" id="3.40.50.300">
    <property type="entry name" value="P-loop containing nucleotide triphosphate hydrolases"/>
    <property type="match status" value="1"/>
</dbReference>
<dbReference type="HAMAP" id="MF_00309">
    <property type="entry name" value="ATP_synth_A_arch"/>
    <property type="match status" value="1"/>
</dbReference>
<dbReference type="InterPro" id="IPR055190">
    <property type="entry name" value="ATP-synt_VA_C"/>
</dbReference>
<dbReference type="InterPro" id="IPR031686">
    <property type="entry name" value="ATP-synth_a_Xtn"/>
</dbReference>
<dbReference type="InterPro" id="IPR023366">
    <property type="entry name" value="ATP_synth_asu-like_sf"/>
</dbReference>
<dbReference type="InterPro" id="IPR004100">
    <property type="entry name" value="ATPase_F1/V1/A1_a/bsu_N"/>
</dbReference>
<dbReference type="InterPro" id="IPR036121">
    <property type="entry name" value="ATPase_F1/V1/A1_a/bsu_N_sf"/>
</dbReference>
<dbReference type="InterPro" id="IPR000194">
    <property type="entry name" value="ATPase_F1/V1/A1_a/bsu_nucl-bd"/>
</dbReference>
<dbReference type="InterPro" id="IPR024034">
    <property type="entry name" value="ATPase_F1/V1_b/a_C"/>
</dbReference>
<dbReference type="InterPro" id="IPR027417">
    <property type="entry name" value="P-loop_NTPase"/>
</dbReference>
<dbReference type="InterPro" id="IPR022878">
    <property type="entry name" value="V-ATPase_asu"/>
</dbReference>
<dbReference type="NCBIfam" id="NF003220">
    <property type="entry name" value="PRK04192.1"/>
    <property type="match status" value="1"/>
</dbReference>
<dbReference type="PANTHER" id="PTHR43607:SF1">
    <property type="entry name" value="H(+)-TRANSPORTING TWO-SECTOR ATPASE"/>
    <property type="match status" value="1"/>
</dbReference>
<dbReference type="PANTHER" id="PTHR43607">
    <property type="entry name" value="V-TYPE PROTON ATPASE CATALYTIC SUBUNIT A"/>
    <property type="match status" value="1"/>
</dbReference>
<dbReference type="Pfam" id="PF00006">
    <property type="entry name" value="ATP-synt_ab"/>
    <property type="match status" value="1"/>
</dbReference>
<dbReference type="Pfam" id="PF02874">
    <property type="entry name" value="ATP-synt_ab_N"/>
    <property type="match status" value="1"/>
</dbReference>
<dbReference type="Pfam" id="PF16886">
    <property type="entry name" value="ATP-synt_ab_Xtn"/>
    <property type="match status" value="1"/>
</dbReference>
<dbReference type="Pfam" id="PF22919">
    <property type="entry name" value="ATP-synt_VA_C"/>
    <property type="match status" value="1"/>
</dbReference>
<dbReference type="SUPFAM" id="SSF47917">
    <property type="entry name" value="C-terminal domain of alpha and beta subunits of F1 ATP synthase"/>
    <property type="match status" value="1"/>
</dbReference>
<dbReference type="SUPFAM" id="SSF50615">
    <property type="entry name" value="N-terminal domain of alpha and beta subunits of F1 ATP synthase"/>
    <property type="match status" value="1"/>
</dbReference>
<dbReference type="SUPFAM" id="SSF52540">
    <property type="entry name" value="P-loop containing nucleoside triphosphate hydrolases"/>
    <property type="match status" value="1"/>
</dbReference>
<name>VATA_CLOBB</name>